<name>H3C_BOVIN</name>
<comment type="function">
    <text>Core component of nucleosome. Nucleosomes wrap and compact DNA into chromatin, limiting DNA accessibility to the cellular machineries which require DNA as a template. Histones thereby play a central role in transcription regulation, DNA repair, DNA replication and chromosomal stability. DNA accessibility is regulated via a complex set of post-translational modifications of histones, also called histone code, and nucleosome remodeling.</text>
</comment>
<comment type="subunit">
    <text>The nucleosome is a histone octamer containing two molecules each of H2A, H2B, H3 and H4 assembled in one H3-H4 heterotetramer and two H2A-H2B heterodimers. The octamer wraps approximately 147 bp of DNA.</text>
</comment>
<comment type="subcellular location">
    <subcellularLocation>
        <location evidence="1">Nucleus</location>
    </subcellularLocation>
    <subcellularLocation>
        <location evidence="5">Chromosome</location>
    </subcellularLocation>
</comment>
<comment type="PTM">
    <text evidence="5">Acetylation is generally linked to gene activation. Acetylation on Lys-19 (H3K18ac) favors methylation at Arg-18 (H3R17me).</text>
</comment>
<comment type="PTM">
    <text evidence="5">Citrullination at Arg-18 by PADI4 impairs methylation and represses transcription.</text>
</comment>
<comment type="PTM">
    <text evidence="5">Asymmetric dimethylation at Arg-18 (H3R17me2a) by CARM1 is linked to gene activation. Asymmetric dimethylation at Arg-3 (H3R2me2a) by PRMT6 is linked to gene repression and is mutually exclusive with H3 Lys-5 methylation (H3K4me2 and H3K4me3). H3R2me2a is present at the 3' of genes regardless of their transcription state and is enriched on inactive promoters, while it is absent on active promoters (By similarity).</text>
</comment>
<comment type="PTM">
    <text evidence="5">Methylation at Lys-5 (H3K4me) and Lys-80 (H3K79me) are linked to gene activation. Methylation at Lys-5 (H3K4me) facilitates subsequent acetylation of H3 and H4. Methylation at Lys-80 (H3K79me) is associated with DNA double-strand break (DSB) responses and is a specific target for TP53BP1. Methylation at Lys-10 (H3K9me) and Lys-28 (H3K27me) are linked to gene repression. Methylation at Lys-10 (H3K9me) is a specific target for HP1 proteins (CBX1, CBX3 and CBX5) and prevents subsequent phosphorylation at Ser-11 (H3S10ph) and acetylation of H3 and H4. Methylation at Lys-5 (H3K4me) and Lys-80 (H3K79me) require preliminary monoubiquitination of H2B at 'Lys-120'. Methylation at Lys-10 (H3K9me) and Lys-28 (H3K27me) are enriched in inactive X chromosome chromatin. Monomethylation at Lys-57 (H3K56me1) by EHMT2/G9A in G1 phase promotes interaction with PCNA and is required for DNA replication (By similarity).</text>
</comment>
<comment type="PTM">
    <text evidence="5">Phosphorylated at Thr-4 (H3T3ph) by HASPIN during prophase and dephosphorylated during anaphase. Phosphorylation at Ser-11 (H3S10ph) by AURKB is crucial for chromosome condensation and cell-cycle progression during mitosis and meiosis. In addition phosphorylation at Ser-11 (H3S10ph) by RPS6KA4 and RPS6KA5 is important during interphase because it enables the transcription of genes following external stimulation, like mitogens, stress, growth factors or UV irradiation and result in the activation of genes, such as c-fos and c-jun. Phosphorylation at Ser-11 (H3S10ph), which is linked to gene activation, prevents methylation at Lys-10 (H3K9me) but facilitates acetylation of H3 and H4. Phosphorylation at Ser-11 (H3S10ph) by AURKB mediates the dissociation of HP1 proteins (CBX1, CBX3 and CBX5) from heterochromatin. Phosphorylation at Ser-11 (H3S10ph) is also an essential regulatory mechanism for neoplastic cell transformation. Phosphorylated at Ser-29 (H3S28ph) by MAP3K20 isoform 1, RPS6KA5 or AURKB during mitosis or upon ultraviolet B irradiation. Phosphorylation at Thr-7 (H3T6ph) by PRKCB is a specific tag for epigenetic transcriptional activation that prevents demethylation of Lys-5 (H3K4me) by LSD1/KDM1A. At centromeres, specifically phosphorylated at Thr-12 (H3T11ph) from prophase to early anaphase, by DAPK3 and PKN1. Phosphorylation at Thr-12 (H3T11ph) by PKN1 or isoform M2 of PKM (PKM2) is a specific tag for epigenetic transcriptional activation that promotes demethylation of Lys-10 (H3K9me) by KDM4C/JMJD2C. Phosphorylation at Tyr-42 (H3Y41ph) by JAK2 promotes exclusion of CBX5 (HP1 alpha) from chromatin (By similarity).</text>
</comment>
<comment type="PTM">
    <text evidence="1">Lysine deamination at Lys-5 (H3K4all) to form allysine is mediated by LOXL2. Allysine formation by LOXL2 only takes place on H3K4me3 and results in gene repression (By similarity).</text>
</comment>
<comment type="PTM">
    <text evidence="4">Butyrylation of histones marks active promoters and competes with histone acetylation. It is present during late spermatogenesis.</text>
</comment>
<comment type="PTM">
    <text evidence="2">Succinylation at Lys-80 (H3K79succ) by KAT2A takes place with a maximum frequency around the transcription start sites of genes. It gives a specific tag for epigenetic transcription activation.</text>
</comment>
<comment type="PTM">
    <text evidence="2">Serine ADP-ribosylation constitutes the primary form of ADP-ribosylation of proteins in response to DNA damage. Serine ADP-ribosylation at Ser-11 (H3S10ADPr) is mutually exclusive with phosphorylation at Ser-11 (H3S10ph) and impairs acetylation at Lys-10 (H3K9ac).</text>
</comment>
<comment type="similarity">
    <text evidence="9">Belongs to the histone H3 family.</text>
</comment>
<gene>
    <name evidence="6" type="primary">H3-5</name>
</gene>
<keyword id="KW-0007">Acetylation</keyword>
<keyword id="KW-0013">ADP-ribosylation</keyword>
<keyword id="KW-0158">Chromosome</keyword>
<keyword id="KW-0164">Citrullination</keyword>
<keyword id="KW-0238">DNA-binding</keyword>
<keyword id="KW-0379">Hydroxylation</keyword>
<keyword id="KW-0488">Methylation</keyword>
<keyword id="KW-0544">Nucleosome core</keyword>
<keyword id="KW-0539">Nucleus</keyword>
<keyword id="KW-0597">Phosphoprotein</keyword>
<keyword id="KW-1185">Reference proteome</keyword>
<keyword id="KW-0832">Ubl conjugation</keyword>
<proteinExistence type="evidence at transcript level"/>
<sequence length="136" mass="15376">MARTKQTARKSTGGKAPRKQLVTKAARKSAPSTGGMKKPHRYRPGTVALREIRRHQKSTELLIRKLPFQRLVREIAQDFKTDLRFQSAAIGALQEASEAYLVGLFEDTNLCAIHAKRVTVMPRDIQLARRIRGERA</sequence>
<accession>A5PK61</accession>
<dbReference type="EMBL" id="DAAA02038231">
    <property type="status" value="NOT_ANNOTATED_CDS"/>
    <property type="molecule type" value="Genomic_DNA"/>
</dbReference>
<dbReference type="EMBL" id="BC142372">
    <property type="protein sequence ID" value="AAI42373.1"/>
    <property type="molecule type" value="mRNA"/>
</dbReference>
<dbReference type="RefSeq" id="NP_001092840.1">
    <property type="nucleotide sequence ID" value="NM_001099370.2"/>
</dbReference>
<dbReference type="SMR" id="A5PK61"/>
<dbReference type="FunCoup" id="A5PK61">
    <property type="interactions" value="221"/>
</dbReference>
<dbReference type="STRING" id="9913.ENSBTAP00000048062"/>
<dbReference type="PaxDb" id="9913-ENSBTAP00000048062"/>
<dbReference type="GeneID" id="512741"/>
<dbReference type="KEGG" id="bta:512741"/>
<dbReference type="CTD" id="440093"/>
<dbReference type="VEuPathDB" id="HostDB:ENSBTAG00000017016"/>
<dbReference type="eggNOG" id="KOG1745">
    <property type="taxonomic scope" value="Eukaryota"/>
</dbReference>
<dbReference type="HOGENOM" id="CLU_078295_4_0_1"/>
<dbReference type="InParanoid" id="A5PK61"/>
<dbReference type="OMA" id="HDINEGY"/>
<dbReference type="OrthoDB" id="9845771at2759"/>
<dbReference type="TreeFam" id="TF314241"/>
<dbReference type="Proteomes" id="UP000009136">
    <property type="component" value="Chromosome 14"/>
</dbReference>
<dbReference type="Bgee" id="ENSBTAG00000017016">
    <property type="expression patterns" value="Expressed in spermatocyte and 98 other cell types or tissues"/>
</dbReference>
<dbReference type="GO" id="GO:0000786">
    <property type="term" value="C:nucleosome"/>
    <property type="evidence" value="ECO:0007669"/>
    <property type="project" value="UniProtKB-KW"/>
</dbReference>
<dbReference type="GO" id="GO:0005634">
    <property type="term" value="C:nucleus"/>
    <property type="evidence" value="ECO:0000318"/>
    <property type="project" value="GO_Central"/>
</dbReference>
<dbReference type="GO" id="GO:0003677">
    <property type="term" value="F:DNA binding"/>
    <property type="evidence" value="ECO:0007669"/>
    <property type="project" value="UniProtKB-KW"/>
</dbReference>
<dbReference type="GO" id="GO:0046982">
    <property type="term" value="F:protein heterodimerization activity"/>
    <property type="evidence" value="ECO:0007669"/>
    <property type="project" value="InterPro"/>
</dbReference>
<dbReference type="GO" id="GO:0030527">
    <property type="term" value="F:structural constituent of chromatin"/>
    <property type="evidence" value="ECO:0007669"/>
    <property type="project" value="InterPro"/>
</dbReference>
<dbReference type="CDD" id="cd22911">
    <property type="entry name" value="HFD_H3"/>
    <property type="match status" value="1"/>
</dbReference>
<dbReference type="FunFam" id="1.10.20.10:FF:000078">
    <property type="entry name" value="Histone H3"/>
    <property type="match status" value="1"/>
</dbReference>
<dbReference type="FunFam" id="1.10.20.10:FF:000044">
    <property type="entry name" value="Histone H3.3"/>
    <property type="match status" value="1"/>
</dbReference>
<dbReference type="Gene3D" id="1.10.20.10">
    <property type="entry name" value="Histone, subunit A"/>
    <property type="match status" value="1"/>
</dbReference>
<dbReference type="InterPro" id="IPR009072">
    <property type="entry name" value="Histone-fold"/>
</dbReference>
<dbReference type="InterPro" id="IPR007125">
    <property type="entry name" value="Histone_H2A/H2B/H3"/>
</dbReference>
<dbReference type="InterPro" id="IPR000164">
    <property type="entry name" value="Histone_H3/CENP-A"/>
</dbReference>
<dbReference type="PANTHER" id="PTHR11426">
    <property type="entry name" value="HISTONE H3"/>
    <property type="match status" value="1"/>
</dbReference>
<dbReference type="Pfam" id="PF00125">
    <property type="entry name" value="Histone"/>
    <property type="match status" value="1"/>
</dbReference>
<dbReference type="PRINTS" id="PR00622">
    <property type="entry name" value="HISTONEH3"/>
</dbReference>
<dbReference type="SMART" id="SM00428">
    <property type="entry name" value="H3"/>
    <property type="match status" value="1"/>
</dbReference>
<dbReference type="SUPFAM" id="SSF47113">
    <property type="entry name" value="Histone-fold"/>
    <property type="match status" value="1"/>
</dbReference>
<dbReference type="PROSITE" id="PS00322">
    <property type="entry name" value="HISTONE_H3_1"/>
    <property type="match status" value="1"/>
</dbReference>
<dbReference type="PROSITE" id="PS00959">
    <property type="entry name" value="HISTONE_H3_2"/>
    <property type="match status" value="1"/>
</dbReference>
<evidence type="ECO:0000250" key="1"/>
<evidence type="ECO:0000250" key="2">
    <source>
        <dbReference type="UniProtKB" id="P68431"/>
    </source>
</evidence>
<evidence type="ECO:0000250" key="3">
    <source>
        <dbReference type="UniProtKB" id="P68432"/>
    </source>
</evidence>
<evidence type="ECO:0000250" key="4">
    <source>
        <dbReference type="UniProtKB" id="P68433"/>
    </source>
</evidence>
<evidence type="ECO:0000250" key="5">
    <source>
        <dbReference type="UniProtKB" id="P84243"/>
    </source>
</evidence>
<evidence type="ECO:0000250" key="6">
    <source>
        <dbReference type="UniProtKB" id="Q6NXT2"/>
    </source>
</evidence>
<evidence type="ECO:0000250" key="7">
    <source>
        <dbReference type="UniProtKB" id="Q71DI3"/>
    </source>
</evidence>
<evidence type="ECO:0000256" key="8">
    <source>
        <dbReference type="SAM" id="MobiDB-lite"/>
    </source>
</evidence>
<evidence type="ECO:0000305" key="9"/>
<feature type="initiator methionine" description="Removed" evidence="9">
    <location>
        <position position="1"/>
    </location>
</feature>
<feature type="chain" id="PRO_0000418438" description="Histone H3.3C">
    <location>
        <begin position="2"/>
        <end position="136"/>
    </location>
</feature>
<feature type="region of interest" description="Disordered" evidence="8">
    <location>
        <begin position="1"/>
        <end position="44"/>
    </location>
</feature>
<feature type="modified residue" description="Asymmetric dimethylarginine; by PRMT6; alternate" evidence="2">
    <location>
        <position position="3"/>
    </location>
</feature>
<feature type="modified residue" description="Citrulline; alternate" evidence="5">
    <location>
        <position position="3"/>
    </location>
</feature>
<feature type="modified residue" description="Phosphothreonine; by HASPIN" evidence="2">
    <location>
        <position position="4"/>
    </location>
</feature>
<feature type="modified residue" description="Allysine; alternate" evidence="5">
    <location>
        <position position="5"/>
    </location>
</feature>
<feature type="modified residue" description="N6,N6,N6-trimethyllysine; alternate" evidence="2">
    <location>
        <position position="5"/>
    </location>
</feature>
<feature type="modified residue" description="N6,N6-dimethyllysine; alternate" evidence="2">
    <location>
        <position position="5"/>
    </location>
</feature>
<feature type="modified residue" description="N6-(2-hydroxyisobutyryl)lysine; alternate" evidence="2">
    <location>
        <position position="5"/>
    </location>
</feature>
<feature type="modified residue" description="N6-(beta-hydroxybutyryl)lysine; alternate" evidence="4">
    <location>
        <position position="5"/>
    </location>
</feature>
<feature type="modified residue" description="N6-acetyllysine; alternate" evidence="2">
    <location>
        <position position="5"/>
    </location>
</feature>
<feature type="modified residue" description="N6-methyllysine; alternate" evidence="2">
    <location>
        <position position="5"/>
    </location>
</feature>
<feature type="modified residue" description="5-glutamyl dopamine; alternate" evidence="2">
    <location>
        <position position="6"/>
    </location>
</feature>
<feature type="modified residue" description="5-glutamyl serotonin; alternate" evidence="2">
    <location>
        <position position="6"/>
    </location>
</feature>
<feature type="modified residue" description="Phosphothreonine; by PKC" evidence="2">
    <location>
        <position position="7"/>
    </location>
</feature>
<feature type="modified residue" description="Symmetric dimethylarginine" evidence="4">
    <location>
        <position position="9"/>
    </location>
</feature>
<feature type="modified residue" description="N6,N6,N6-trimethyllysine; alternate" evidence="3">
    <location>
        <position position="10"/>
    </location>
</feature>
<feature type="modified residue" description="N6,N6-dimethyllysine; alternate" evidence="3">
    <location>
        <position position="10"/>
    </location>
</feature>
<feature type="modified residue" description="N6-(2-hydroxyisobutyryl)lysine; alternate" evidence="2">
    <location>
        <position position="10"/>
    </location>
</feature>
<feature type="modified residue" description="N6-(beta-hydroxybutyryl)lysine; alternate" evidence="4">
    <location>
        <position position="10"/>
    </location>
</feature>
<feature type="modified residue" description="N6-acetyllysine; alternate" evidence="2">
    <location>
        <position position="10"/>
    </location>
</feature>
<feature type="modified residue" description="N6-lactoyllysine; alternate" evidence="2">
    <location>
        <position position="10"/>
    </location>
</feature>
<feature type="modified residue" description="N6-methyllysine; alternate" evidence="3">
    <location>
        <position position="10"/>
    </location>
</feature>
<feature type="modified residue" description="ADP-ribosylserine; alternate" evidence="2">
    <location>
        <position position="11"/>
    </location>
</feature>
<feature type="modified residue" description="Phosphoserine; alternate; by AURKB, AURKC, RPS6KA3, RPS6KA4 and RPS6KA5" evidence="3">
    <location>
        <position position="11"/>
    </location>
</feature>
<feature type="modified residue" description="Phosphothreonine; by PKC" evidence="2">
    <location>
        <position position="12"/>
    </location>
</feature>
<feature type="modified residue" description="N6-(2-hydroxyisobutyryl)lysine; alternate" evidence="2">
    <location>
        <position position="15"/>
    </location>
</feature>
<feature type="modified residue" description="N6-(beta-hydroxybutyryl)lysine; alternate" evidence="4">
    <location>
        <position position="15"/>
    </location>
</feature>
<feature type="modified residue" description="N6-acetyllysine; alternate" evidence="3">
    <location>
        <position position="15"/>
    </location>
</feature>
<feature type="modified residue" description="N6-glutaryllysine; alternate" evidence="5">
    <location>
        <position position="15"/>
    </location>
</feature>
<feature type="modified residue" description="N6-lactoyllysine; alternate" evidence="4">
    <location>
        <position position="15"/>
    </location>
</feature>
<feature type="modified residue" description="N6-succinyllysine; alternate" evidence="2">
    <location>
        <position position="15"/>
    </location>
</feature>
<feature type="modified residue" description="Asymmetric dimethylarginine" evidence="2">
    <location>
        <position position="18"/>
    </location>
</feature>
<feature type="modified residue" description="N6-(2-hydroxyisobutyryl)lysine; alternate" evidence="2">
    <location>
        <position position="19"/>
    </location>
</feature>
<feature type="modified residue" description="N6-(beta-hydroxybutyryl)lysine; alternate" evidence="4">
    <location>
        <position position="19"/>
    </location>
</feature>
<feature type="modified residue" description="N6-acetyllysine; alternate" evidence="2">
    <location>
        <position position="19"/>
    </location>
</feature>
<feature type="modified residue" description="N6-butyryllysine; alternate" evidence="4">
    <location>
        <position position="19"/>
    </location>
</feature>
<feature type="modified residue" description="N6-glutaryllysine; alternate" evidence="5">
    <location>
        <position position="19"/>
    </location>
</feature>
<feature type="modified residue" description="N6-lactoyllysine; alternate" evidence="2">
    <location>
        <position position="19"/>
    </location>
</feature>
<feature type="modified residue" description="N6-methyllysine; alternate" evidence="2">
    <location>
        <position position="19"/>
    </location>
</feature>
<feature type="modified residue" description="N6-(2-hydroxyisobutyryl)lysine; alternate" evidence="2">
    <location>
        <position position="24"/>
    </location>
</feature>
<feature type="modified residue" description="N6-(beta-hydroxybutyryl)lysine; alternate" evidence="4">
    <location>
        <position position="24"/>
    </location>
</feature>
<feature type="modified residue" description="N6-acetyllysine; alternate" evidence="3">
    <location>
        <position position="24"/>
    </location>
</feature>
<feature type="modified residue" description="N6-butyryllysine; alternate" evidence="4">
    <location>
        <position position="24"/>
    </location>
</feature>
<feature type="modified residue" description="N6-glutaryllysine; alternate" evidence="5">
    <location>
        <position position="24"/>
    </location>
</feature>
<feature type="modified residue" description="N6-lactoyllysine; alternate" evidence="2">
    <location>
        <position position="24"/>
    </location>
</feature>
<feature type="modified residue" description="N6-methyllysine; alternate" evidence="2">
    <location>
        <position position="24"/>
    </location>
</feature>
<feature type="modified residue" description="Citrulline" evidence="5">
    <location>
        <position position="27"/>
    </location>
</feature>
<feature type="modified residue" description="N6,N6,N6-trimethyllysine; alternate" evidence="3">
    <location>
        <position position="28"/>
    </location>
</feature>
<feature type="modified residue" description="N6,N6-dimethyllysine; alternate" evidence="3">
    <location>
        <position position="28"/>
    </location>
</feature>
<feature type="modified residue" description="N6-(2-hydroxyisobutyryl)lysine; alternate" evidence="2">
    <location>
        <position position="28"/>
    </location>
</feature>
<feature type="modified residue" description="N6-acetyllysine; alternate" evidence="2">
    <location>
        <position position="28"/>
    </location>
</feature>
<feature type="modified residue" description="N6-glutaryllysine; alternate" evidence="5">
    <location>
        <position position="28"/>
    </location>
</feature>
<feature type="modified residue" description="N6-lactoyllysine; alternate" evidence="2">
    <location>
        <position position="28"/>
    </location>
</feature>
<feature type="modified residue" description="N6-methyllysine; alternate" evidence="3">
    <location>
        <position position="28"/>
    </location>
</feature>
<feature type="modified residue" description="ADP-ribosylserine; alternate" evidence="2">
    <location>
        <position position="29"/>
    </location>
</feature>
<feature type="modified residue" description="Phosphoserine; alternate; by AURKB, AURKC and RPS6KA5" evidence="3">
    <location>
        <position position="29"/>
    </location>
</feature>
<feature type="modified residue" description="Phosphoserine" evidence="5">
    <location>
        <position position="32"/>
    </location>
</feature>
<feature type="modified residue" description="N6,N6,N6-trimethyllysine; alternate" evidence="2">
    <location>
        <position position="37"/>
    </location>
</feature>
<feature type="modified residue" description="N6,N6-dimethyllysine; alternate" evidence="2">
    <location>
        <position position="37"/>
    </location>
</feature>
<feature type="modified residue" description="N6-(2-hydroxyisobutyryl)lysine; alternate" evidence="2">
    <location>
        <position position="37"/>
    </location>
</feature>
<feature type="modified residue" description="N6-acetyllysine; alternate" evidence="2">
    <location>
        <position position="37"/>
    </location>
</feature>
<feature type="modified residue" description="N6-methyllysine; alternate" evidence="2">
    <location>
        <position position="37"/>
    </location>
</feature>
<feature type="modified residue" description="N6-methyllysine" evidence="2">
    <location>
        <position position="38"/>
    </location>
</feature>
<feature type="modified residue" description="Phosphotyrosine" evidence="2">
    <location>
        <position position="42"/>
    </location>
</feature>
<feature type="modified residue" description="N6,N6,N6-trimethyllysine; alternate" evidence="2">
    <location>
        <position position="57"/>
    </location>
</feature>
<feature type="modified residue" description="N6-(2-hydroxyisobutyryl)lysine; alternate" evidence="2">
    <location>
        <position position="57"/>
    </location>
</feature>
<feature type="modified residue" description="N6-(beta-hydroxybutyryl)lysine; alternate" evidence="4">
    <location>
        <position position="57"/>
    </location>
</feature>
<feature type="modified residue" description="N6-acetyllysine; alternate" evidence="2">
    <location>
        <position position="57"/>
    </location>
</feature>
<feature type="modified residue" description="N6-glutaryllysine; alternate" evidence="5">
    <location>
        <position position="57"/>
    </location>
</feature>
<feature type="modified residue" description="N6-lactoyllysine; alternate" evidence="4">
    <location>
        <position position="57"/>
    </location>
</feature>
<feature type="modified residue" description="N6-methyllysine; alternate" evidence="2">
    <location>
        <position position="57"/>
    </location>
</feature>
<feature type="modified residue" description="N6-succinyllysine; alternate" evidence="2">
    <location>
        <position position="57"/>
    </location>
</feature>
<feature type="modified residue" description="Phosphoserine" evidence="6">
    <location>
        <position position="58"/>
    </location>
</feature>
<feature type="modified residue" description="N6-(2-hydroxyisobutyryl)lysine; alternate" evidence="2">
    <location>
        <position position="65"/>
    </location>
</feature>
<feature type="modified residue" description="N6-methyllysine; alternate" evidence="2">
    <location>
        <position position="65"/>
    </location>
</feature>
<feature type="modified residue" description="N6,N6,N6-trimethyllysine; alternate" evidence="4">
    <location>
        <position position="80"/>
    </location>
</feature>
<feature type="modified residue" description="N6,N6-dimethyllysine; alternate" evidence="2">
    <location>
        <position position="80"/>
    </location>
</feature>
<feature type="modified residue" description="N6-(2-hydroxyisobutyryl)lysine; alternate" evidence="2">
    <location>
        <position position="80"/>
    </location>
</feature>
<feature type="modified residue" description="N6-acetyllysine; alternate" evidence="2">
    <location>
        <position position="80"/>
    </location>
</feature>
<feature type="modified residue" description="N6-glutaryllysine; alternate" evidence="5">
    <location>
        <position position="80"/>
    </location>
</feature>
<feature type="modified residue" description="N6-lactoyllysine; alternate" evidence="2">
    <location>
        <position position="80"/>
    </location>
</feature>
<feature type="modified residue" description="N6-methyllysine; alternate" evidence="2">
    <location>
        <position position="80"/>
    </location>
</feature>
<feature type="modified residue" description="N6-succinyllysine; alternate" evidence="2">
    <location>
        <position position="80"/>
    </location>
</feature>
<feature type="modified residue" description="Phosphothreonine" evidence="6">
    <location>
        <position position="81"/>
    </location>
</feature>
<feature type="modified residue" description="Phosphoserine" evidence="5">
    <location>
        <position position="87"/>
    </location>
</feature>
<feature type="modified residue" description="Phosphothreonine" evidence="7">
    <location>
        <position position="108"/>
    </location>
</feature>
<feature type="modified residue" description="N6-acetyllysine; alternate" evidence="2">
    <location>
        <position position="116"/>
    </location>
</feature>
<feature type="modified residue" description="N6-glutaryllysine; alternate" evidence="5">
    <location>
        <position position="116"/>
    </location>
</feature>
<reference key="1">
    <citation type="journal article" date="2009" name="Genome Biol.">
        <title>A whole-genome assembly of the domestic cow, Bos taurus.</title>
        <authorList>
            <person name="Zimin A.V."/>
            <person name="Delcher A.L."/>
            <person name="Florea L."/>
            <person name="Kelley D.R."/>
            <person name="Schatz M.C."/>
            <person name="Puiu D."/>
            <person name="Hanrahan F."/>
            <person name="Pertea G."/>
            <person name="Van Tassell C.P."/>
            <person name="Sonstegard T.S."/>
            <person name="Marcais G."/>
            <person name="Roberts M."/>
            <person name="Subramanian P."/>
            <person name="Yorke J.A."/>
            <person name="Salzberg S.L."/>
        </authorList>
    </citation>
    <scope>NUCLEOTIDE SEQUENCE [LARGE SCALE GENOMIC DNA]</scope>
    <source>
        <strain>Hereford</strain>
    </source>
</reference>
<reference key="2">
    <citation type="submission" date="2007-06" db="EMBL/GenBank/DDBJ databases">
        <authorList>
            <consortium name="NIH - Mammalian Gene Collection (MGC) project"/>
        </authorList>
    </citation>
    <scope>NUCLEOTIDE SEQUENCE [LARGE SCALE MRNA]</scope>
    <source>
        <strain>Crossbred X Angus</strain>
        <tissue>Liver</tissue>
    </source>
</reference>
<protein>
    <recommendedName>
        <fullName>Histone H3.3C</fullName>
    </recommendedName>
</protein>
<organism>
    <name type="scientific">Bos taurus</name>
    <name type="common">Bovine</name>
    <dbReference type="NCBI Taxonomy" id="9913"/>
    <lineage>
        <taxon>Eukaryota</taxon>
        <taxon>Metazoa</taxon>
        <taxon>Chordata</taxon>
        <taxon>Craniata</taxon>
        <taxon>Vertebrata</taxon>
        <taxon>Euteleostomi</taxon>
        <taxon>Mammalia</taxon>
        <taxon>Eutheria</taxon>
        <taxon>Laurasiatheria</taxon>
        <taxon>Artiodactyla</taxon>
        <taxon>Ruminantia</taxon>
        <taxon>Pecora</taxon>
        <taxon>Bovidae</taxon>
        <taxon>Bovinae</taxon>
        <taxon>Bos</taxon>
    </lineage>
</organism>